<accession>Q8RVM0</accession>
<protein>
    <recommendedName>
        <fullName evidence="6">Monomethylxanthine methyltransferase 2</fullName>
        <shortName evidence="6">CaMXMT2</shortName>
        <ecNumber evidence="3">2.1.1.159</ecNumber>
    </recommendedName>
    <alternativeName>
        <fullName evidence="6">7-methylxanthine N-methyltransferase 2</fullName>
    </alternativeName>
    <alternativeName>
        <fullName evidence="6">Theobromine synthase MXMT2</fullName>
    </alternativeName>
</protein>
<organism>
    <name type="scientific">Coffea canephora</name>
    <name type="common">Robusta coffee</name>
    <dbReference type="NCBI Taxonomy" id="49390"/>
    <lineage>
        <taxon>Eukaryota</taxon>
        <taxon>Viridiplantae</taxon>
        <taxon>Streptophyta</taxon>
        <taxon>Embryophyta</taxon>
        <taxon>Tracheophyta</taxon>
        <taxon>Spermatophyta</taxon>
        <taxon>Magnoliopsida</taxon>
        <taxon>eudicotyledons</taxon>
        <taxon>Gunneridae</taxon>
        <taxon>Pentapetalae</taxon>
        <taxon>asterids</taxon>
        <taxon>lamiids</taxon>
        <taxon>Gentianales</taxon>
        <taxon>Rubiaceae</taxon>
        <taxon>Ixoroideae</taxon>
        <taxon>Gardenieae complex</taxon>
        <taxon>Bertiereae - Coffeeae clade</taxon>
        <taxon>Coffeeae</taxon>
        <taxon>Coffea</taxon>
    </lineage>
</organism>
<dbReference type="EC" id="2.1.1.159" evidence="3"/>
<dbReference type="EMBL" id="AF494415">
    <property type="protein sequence ID" value="AAM18505.1"/>
    <property type="molecule type" value="mRNA"/>
</dbReference>
<dbReference type="SMR" id="Q8RVM0"/>
<dbReference type="GO" id="GO:0046872">
    <property type="term" value="F:metal ion binding"/>
    <property type="evidence" value="ECO:0007669"/>
    <property type="project" value="UniProtKB-KW"/>
</dbReference>
<dbReference type="GO" id="GO:0008168">
    <property type="term" value="F:methyltransferase activity"/>
    <property type="evidence" value="ECO:0007669"/>
    <property type="project" value="UniProtKB-KW"/>
</dbReference>
<dbReference type="GO" id="GO:0009820">
    <property type="term" value="P:alkaloid metabolic process"/>
    <property type="evidence" value="ECO:0007669"/>
    <property type="project" value="UniProtKB-KW"/>
</dbReference>
<dbReference type="GO" id="GO:0032259">
    <property type="term" value="P:methylation"/>
    <property type="evidence" value="ECO:0007669"/>
    <property type="project" value="UniProtKB-KW"/>
</dbReference>
<dbReference type="Gene3D" id="1.10.1200.270">
    <property type="entry name" value="Methyltransferase, alpha-helical capping domain"/>
    <property type="match status" value="1"/>
</dbReference>
<dbReference type="Gene3D" id="3.40.50.150">
    <property type="entry name" value="Vaccinia Virus protein VP39"/>
    <property type="match status" value="1"/>
</dbReference>
<dbReference type="InterPro" id="IPR005299">
    <property type="entry name" value="MeTrfase_7"/>
</dbReference>
<dbReference type="InterPro" id="IPR042086">
    <property type="entry name" value="MeTrfase_capping"/>
</dbReference>
<dbReference type="InterPro" id="IPR029063">
    <property type="entry name" value="SAM-dependent_MTases_sf"/>
</dbReference>
<dbReference type="PANTHER" id="PTHR31009">
    <property type="entry name" value="S-ADENOSYL-L-METHIONINE:CARBOXYL METHYLTRANSFERASE FAMILY PROTEIN"/>
    <property type="match status" value="1"/>
</dbReference>
<dbReference type="Pfam" id="PF03492">
    <property type="entry name" value="Methyltransf_7"/>
    <property type="match status" value="1"/>
</dbReference>
<dbReference type="SUPFAM" id="SSF53335">
    <property type="entry name" value="S-adenosyl-L-methionine-dependent methyltransferases"/>
    <property type="match status" value="1"/>
</dbReference>
<proteinExistence type="evidence at transcript level"/>
<keyword id="KW-0017">Alkaloid metabolism</keyword>
<keyword id="KW-0460">Magnesium</keyword>
<keyword id="KW-0479">Metal-binding</keyword>
<keyword id="KW-0489">Methyltransferase</keyword>
<keyword id="KW-0949">S-adenosyl-L-methionine</keyword>
<keyword id="KW-0808">Transferase</keyword>
<gene>
    <name evidence="6" type="primary">MXMT2</name>
</gene>
<feature type="chain" id="PRO_0000451781" description="Monomethylxanthine methyltransferase 2">
    <location>
        <begin position="1"/>
        <end position="371"/>
    </location>
</feature>
<feature type="binding site" evidence="2">
    <location>
        <position position="18"/>
    </location>
    <ligand>
        <name>S-adenosyl-L-homocysteine</name>
        <dbReference type="ChEBI" id="CHEBI:57856"/>
    </ligand>
</feature>
<feature type="binding site" evidence="2">
    <location>
        <position position="61"/>
    </location>
    <ligand>
        <name>S-adenosyl-L-homocysteine</name>
        <dbReference type="ChEBI" id="CHEBI:57856"/>
    </ligand>
</feature>
<feature type="binding site" evidence="2">
    <location>
        <position position="66"/>
    </location>
    <ligand>
        <name>S-adenosyl-L-homocysteine</name>
        <dbReference type="ChEBI" id="CHEBI:57856"/>
    </ligand>
</feature>
<feature type="binding site" evidence="2">
    <location>
        <position position="100"/>
    </location>
    <ligand>
        <name>S-adenosyl-L-homocysteine</name>
        <dbReference type="ChEBI" id="CHEBI:57856"/>
    </ligand>
</feature>
<feature type="binding site" evidence="2">
    <location>
        <position position="101"/>
    </location>
    <ligand>
        <name>S-adenosyl-L-homocysteine</name>
        <dbReference type="ChEBI" id="CHEBI:57856"/>
    </ligand>
</feature>
<feature type="binding site" evidence="2">
    <location>
        <position position="139"/>
    </location>
    <ligand>
        <name>S-adenosyl-L-homocysteine</name>
        <dbReference type="ChEBI" id="CHEBI:57856"/>
    </ligand>
</feature>
<feature type="binding site" evidence="2">
    <location>
        <position position="140"/>
    </location>
    <ligand>
        <name>S-adenosyl-L-homocysteine</name>
        <dbReference type="ChEBI" id="CHEBI:57856"/>
    </ligand>
</feature>
<feature type="binding site" evidence="1">
    <location>
        <position position="156"/>
    </location>
    <ligand>
        <name>S-adenosyl-L-homocysteine</name>
        <dbReference type="ChEBI" id="CHEBI:57856"/>
    </ligand>
</feature>
<feature type="binding site" evidence="2">
    <location>
        <position position="157"/>
    </location>
    <ligand>
        <name>theobromine</name>
        <dbReference type="ChEBI" id="CHEBI:28946"/>
    </ligand>
</feature>
<feature type="binding site" evidence="2">
    <location>
        <position position="160"/>
    </location>
    <ligand>
        <name>theobromine</name>
        <dbReference type="ChEBI" id="CHEBI:28946"/>
    </ligand>
</feature>
<feature type="binding site" evidence="2">
    <location>
        <position position="161"/>
    </location>
    <ligand>
        <name>theobromine</name>
        <dbReference type="ChEBI" id="CHEBI:28946"/>
    </ligand>
</feature>
<feature type="binding site" evidence="4">
    <location>
        <position position="178"/>
    </location>
    <ligand>
        <name>Mg(2+)</name>
        <dbReference type="ChEBI" id="CHEBI:18420"/>
    </ligand>
</feature>
<feature type="binding site" evidence="4">
    <location>
        <position position="260"/>
    </location>
    <ligand>
        <name>Mg(2+)</name>
        <dbReference type="ChEBI" id="CHEBI:18420"/>
    </ligand>
</feature>
<feature type="binding site" evidence="4">
    <location>
        <position position="262"/>
    </location>
    <ligand>
        <name>Mg(2+)</name>
        <dbReference type="ChEBI" id="CHEBI:18420"/>
    </ligand>
</feature>
<feature type="binding site" evidence="4">
    <location>
        <position position="263"/>
    </location>
    <ligand>
        <name>Mg(2+)</name>
        <dbReference type="ChEBI" id="CHEBI:18420"/>
    </ligand>
</feature>
<feature type="binding site" evidence="2">
    <location>
        <position position="355"/>
    </location>
    <ligand>
        <name>theobromine</name>
        <dbReference type="ChEBI" id="CHEBI:28946"/>
    </ligand>
</feature>
<feature type="site" description="Involved in substrate discrimination" evidence="5">
    <location>
        <position position="154"/>
    </location>
</feature>
<feature type="site" description="Involved in substrate discrimination" evidence="5">
    <location>
        <position position="266"/>
    </location>
</feature>
<feature type="site" description="Involved in substrate discrimination" evidence="5">
    <location>
        <position position="330"/>
    </location>
</feature>
<sequence length="371" mass="41810">MELQEVLHMNEGEGDTSYAKNASYNLALAKVKPFLEQCIRELLRANLPNINKYIKVADLGCASGPNTLLTVRDIVQSIDKVGQEEKNELERPTIQIFLNDLFQNDFNSVFKLLPSFYRKLEKENGRKIGSCLISAMPGSFYGRLFPEESMHFLHSCYSVHWLSQVPSGLVIELGIGANKGSIYSSKGCRPPVQKAYLDQFTKDFTTFLRIHSEELFSHGRMLLTCICKGVELDARNAIDLLEMAINDLVVEGHLEEEKLDSFNLPVYIPSAEEVKCIVEEEGSFEILYLETFKVLYDAGFSIDDEHIKAEYVASSVRAVYEPILASHFGEAIIPDIFHRFAKHAAKVLPLGKGFYNNLIISLAKKPEKSDV</sequence>
<reference key="1">
    <citation type="submission" date="2002-03" db="EMBL/GenBank/DDBJ databases">
        <title>N-methyltransferases in the genus Coffea.</title>
        <authorList>
            <person name="Kretschmar J.A."/>
            <person name="Baumann T.W."/>
        </authorList>
    </citation>
    <scope>NUCLEOTIDE SEQUENCE [MRNA]</scope>
    <source>
        <tissue>Leaf</tissue>
    </source>
</reference>
<reference key="2">
    <citation type="journal article" date="2008" name="Phytochemistry">
        <title>Caffeine and related purine alkaloids: biosynthesis, catabolism, function and genetic engineering.</title>
        <authorList>
            <person name="Ashihara H."/>
            <person name="Sano H."/>
            <person name="Crozier A."/>
        </authorList>
    </citation>
    <scope>REVIEW ON CAFFEINE BIOSYNTHESIS</scope>
</reference>
<comment type="function">
    <text evidence="3">Involved in the biosynthesis of caffeine. Catalyzes the conversion of 7-methylxanthine (7mX) to theobromine and with a lower activity of paraxanthine to caffeine.</text>
</comment>
<comment type="catalytic activity">
    <reaction evidence="3">
        <text>7-methylxanthine + S-adenosyl-L-methionine = theobromine + S-adenosyl-L-homocysteine + H(+)</text>
        <dbReference type="Rhea" id="RHEA:24604"/>
        <dbReference type="ChEBI" id="CHEBI:15378"/>
        <dbReference type="ChEBI" id="CHEBI:28946"/>
        <dbReference type="ChEBI" id="CHEBI:48991"/>
        <dbReference type="ChEBI" id="CHEBI:57856"/>
        <dbReference type="ChEBI" id="CHEBI:59789"/>
        <dbReference type="EC" id="2.1.1.159"/>
    </reaction>
    <physiologicalReaction direction="left-to-right" evidence="3">
        <dbReference type="Rhea" id="RHEA:24605"/>
    </physiologicalReaction>
</comment>
<comment type="cofactor">
    <cofactor evidence="4">
        <name>Mg(2+)</name>
        <dbReference type="ChEBI" id="CHEBI:18420"/>
    </cofactor>
    <text evidence="4">Binds 1 Mg(2+) ion per subunit.</text>
</comment>
<comment type="pathway">
    <text evidence="3">Alkaloid biosynthesis.</text>
</comment>
<comment type="similarity">
    <text evidence="6">Belongs to the methyltransferase superfamily. Type-7 methyltransferase family.</text>
</comment>
<name>MXMT2_COFCA</name>
<evidence type="ECO:0000250" key="1">
    <source>
        <dbReference type="UniProtKB" id="A4GE69"/>
    </source>
</evidence>
<evidence type="ECO:0000250" key="2">
    <source>
        <dbReference type="UniProtKB" id="A4GE70"/>
    </source>
</evidence>
<evidence type="ECO:0000250" key="3">
    <source>
        <dbReference type="UniProtKB" id="Q84PP7"/>
    </source>
</evidence>
<evidence type="ECO:0000250" key="4">
    <source>
        <dbReference type="UniProtKB" id="Q9FLN8"/>
    </source>
</evidence>
<evidence type="ECO:0000250" key="5">
    <source>
        <dbReference type="UniProtKB" id="Q9FZN8"/>
    </source>
</evidence>
<evidence type="ECO:0000305" key="6"/>